<organism>
    <name type="scientific">Gloeobacter violaceus (strain ATCC 29082 / PCC 7421)</name>
    <dbReference type="NCBI Taxonomy" id="251221"/>
    <lineage>
        <taxon>Bacteria</taxon>
        <taxon>Bacillati</taxon>
        <taxon>Cyanobacteriota</taxon>
        <taxon>Cyanophyceae</taxon>
        <taxon>Gloeobacterales</taxon>
        <taxon>Gloeobacteraceae</taxon>
        <taxon>Gloeobacter</taxon>
    </lineage>
</organism>
<dbReference type="EMBL" id="BA000045">
    <property type="protein sequence ID" value="BAC89415.1"/>
    <property type="molecule type" value="Genomic_DNA"/>
</dbReference>
<dbReference type="RefSeq" id="NP_924420.1">
    <property type="nucleotide sequence ID" value="NC_005125.1"/>
</dbReference>
<dbReference type="RefSeq" id="WP_011141474.1">
    <property type="nucleotide sequence ID" value="NC_005125.1"/>
</dbReference>
<dbReference type="SMR" id="Q7NKK3"/>
<dbReference type="FunCoup" id="Q7NKK3">
    <property type="interactions" value="82"/>
</dbReference>
<dbReference type="STRING" id="251221.gene:10758963"/>
<dbReference type="EnsemblBacteria" id="BAC89415">
    <property type="protein sequence ID" value="BAC89415"/>
    <property type="gene ID" value="BAC89415"/>
</dbReference>
<dbReference type="KEGG" id="gvi:gsr1474"/>
<dbReference type="PATRIC" id="fig|251221.4.peg.1506"/>
<dbReference type="eggNOG" id="COG0230">
    <property type="taxonomic scope" value="Bacteria"/>
</dbReference>
<dbReference type="HOGENOM" id="CLU_129938_2_0_3"/>
<dbReference type="InParanoid" id="Q7NKK3"/>
<dbReference type="Proteomes" id="UP000000557">
    <property type="component" value="Chromosome"/>
</dbReference>
<dbReference type="GO" id="GO:1990904">
    <property type="term" value="C:ribonucleoprotein complex"/>
    <property type="evidence" value="ECO:0007669"/>
    <property type="project" value="UniProtKB-KW"/>
</dbReference>
<dbReference type="GO" id="GO:0005840">
    <property type="term" value="C:ribosome"/>
    <property type="evidence" value="ECO:0007669"/>
    <property type="project" value="UniProtKB-KW"/>
</dbReference>
<dbReference type="GO" id="GO:0003735">
    <property type="term" value="F:structural constituent of ribosome"/>
    <property type="evidence" value="ECO:0007669"/>
    <property type="project" value="InterPro"/>
</dbReference>
<dbReference type="GO" id="GO:0006412">
    <property type="term" value="P:translation"/>
    <property type="evidence" value="ECO:0007669"/>
    <property type="project" value="UniProtKB-UniRule"/>
</dbReference>
<dbReference type="Gene3D" id="1.10.287.3980">
    <property type="match status" value="1"/>
</dbReference>
<dbReference type="HAMAP" id="MF_00391">
    <property type="entry name" value="Ribosomal_bL34"/>
    <property type="match status" value="1"/>
</dbReference>
<dbReference type="InterPro" id="IPR000271">
    <property type="entry name" value="Ribosomal_bL34"/>
</dbReference>
<dbReference type="InterPro" id="IPR020939">
    <property type="entry name" value="Ribosomal_bL34_CS"/>
</dbReference>
<dbReference type="NCBIfam" id="TIGR01030">
    <property type="entry name" value="rpmH_bact"/>
    <property type="match status" value="1"/>
</dbReference>
<dbReference type="Pfam" id="PF00468">
    <property type="entry name" value="Ribosomal_L34"/>
    <property type="match status" value="1"/>
</dbReference>
<dbReference type="PROSITE" id="PS00784">
    <property type="entry name" value="RIBOSOMAL_L34"/>
    <property type="match status" value="1"/>
</dbReference>
<accession>Q7NKK3</accession>
<comment type="similarity">
    <text evidence="1">Belongs to the bacterial ribosomal protein bL34 family.</text>
</comment>
<name>RL34_GLOVI</name>
<evidence type="ECO:0000255" key="1">
    <source>
        <dbReference type="HAMAP-Rule" id="MF_00391"/>
    </source>
</evidence>
<evidence type="ECO:0000256" key="2">
    <source>
        <dbReference type="SAM" id="MobiDB-lite"/>
    </source>
</evidence>
<evidence type="ECO:0000305" key="3"/>
<feature type="chain" id="PRO_0000187387" description="Large ribosomal subunit protein bL34">
    <location>
        <begin position="1"/>
        <end position="44"/>
    </location>
</feature>
<feature type="region of interest" description="Disordered" evidence="2">
    <location>
        <begin position="1"/>
        <end position="44"/>
    </location>
</feature>
<feature type="compositionally biased region" description="Basic residues" evidence="2">
    <location>
        <begin position="1"/>
        <end position="14"/>
    </location>
</feature>
<feature type="compositionally biased region" description="Basic residues" evidence="2">
    <location>
        <begin position="31"/>
        <end position="44"/>
    </location>
</feature>
<reference key="1">
    <citation type="journal article" date="2003" name="DNA Res.">
        <title>Complete genome structure of Gloeobacter violaceus PCC 7421, a cyanobacterium that lacks thylakoids.</title>
        <authorList>
            <person name="Nakamura Y."/>
            <person name="Kaneko T."/>
            <person name="Sato S."/>
            <person name="Mimuro M."/>
            <person name="Miyashita H."/>
            <person name="Tsuchiya T."/>
            <person name="Sasamoto S."/>
            <person name="Watanabe A."/>
            <person name="Kawashima K."/>
            <person name="Kishida Y."/>
            <person name="Kiyokawa C."/>
            <person name="Kohara M."/>
            <person name="Matsumoto M."/>
            <person name="Matsuno A."/>
            <person name="Nakazaki N."/>
            <person name="Shimpo S."/>
            <person name="Takeuchi C."/>
            <person name="Yamada M."/>
            <person name="Tabata S."/>
        </authorList>
    </citation>
    <scope>NUCLEOTIDE SEQUENCE [LARGE SCALE GENOMIC DNA]</scope>
    <source>
        <strain>ATCC 29082 / PCC 7421</strain>
    </source>
</reference>
<gene>
    <name evidence="1" type="primary">rpmH</name>
    <name evidence="1" type="synonym">rpl34</name>
    <name type="ordered locus">gsr1474</name>
</gene>
<keyword id="KW-1185">Reference proteome</keyword>
<keyword id="KW-0687">Ribonucleoprotein</keyword>
<keyword id="KW-0689">Ribosomal protein</keyword>
<sequence length="44" mass="5138">MKRTLGGTTRKRQKTSGFRARMRTASGRRVLSARRRRGRHRLAV</sequence>
<proteinExistence type="inferred from homology"/>
<protein>
    <recommendedName>
        <fullName evidence="1">Large ribosomal subunit protein bL34</fullName>
    </recommendedName>
    <alternativeName>
        <fullName evidence="3">50S ribosomal protein L34</fullName>
    </alternativeName>
</protein>